<feature type="signal peptide" evidence="1">
    <location>
        <begin position="1"/>
        <end position="21"/>
    </location>
</feature>
<feature type="chain" id="PRO_0000036368" description="Uteroglobin">
    <location>
        <begin position="22"/>
        <end position="91"/>
    </location>
</feature>
<feature type="disulfide bond" description="Interchain (with C-90)" evidence="1">
    <location>
        <position position="24"/>
    </location>
</feature>
<feature type="disulfide bond" description="Interchain (with C-24)" evidence="1">
    <location>
        <position position="90"/>
    </location>
</feature>
<keyword id="KW-1015">Disulfide bond</keyword>
<keyword id="KW-0446">Lipid-binding</keyword>
<keyword id="KW-0593">Phospholipase A2 inhibitor</keyword>
<keyword id="KW-0964">Secreted</keyword>
<keyword id="KW-0732">Signal</keyword>
<keyword id="KW-0754">Steroid-binding</keyword>
<dbReference type="EMBL" id="M25609">
    <property type="protein sequence ID" value="AAA30960.1"/>
    <property type="molecule type" value="mRNA"/>
</dbReference>
<dbReference type="PIR" id="A23825">
    <property type="entry name" value="UGRBL"/>
</dbReference>
<dbReference type="SMR" id="P06913"/>
<dbReference type="GO" id="GO:0005737">
    <property type="term" value="C:cytoplasm"/>
    <property type="evidence" value="ECO:0007669"/>
    <property type="project" value="TreeGrafter"/>
</dbReference>
<dbReference type="GO" id="GO:0005615">
    <property type="term" value="C:extracellular space"/>
    <property type="evidence" value="ECO:0007669"/>
    <property type="project" value="TreeGrafter"/>
</dbReference>
<dbReference type="GO" id="GO:0019834">
    <property type="term" value="F:phospholipase A2 inhibitor activity"/>
    <property type="evidence" value="ECO:0007669"/>
    <property type="project" value="UniProtKB-KW"/>
</dbReference>
<dbReference type="GO" id="GO:0005496">
    <property type="term" value="F:steroid binding"/>
    <property type="evidence" value="ECO:0007669"/>
    <property type="project" value="UniProtKB-KW"/>
</dbReference>
<dbReference type="GO" id="GO:0007165">
    <property type="term" value="P:signal transduction"/>
    <property type="evidence" value="ECO:0007669"/>
    <property type="project" value="InterPro"/>
</dbReference>
<dbReference type="CDD" id="cd00633">
    <property type="entry name" value="Secretoglobin"/>
    <property type="match status" value="1"/>
</dbReference>
<dbReference type="FunFam" id="1.10.210.10:FF:000001">
    <property type="entry name" value="Uteroglobin"/>
    <property type="match status" value="1"/>
</dbReference>
<dbReference type="Gene3D" id="1.10.210.10">
    <property type="entry name" value="Secretoglobin"/>
    <property type="match status" value="1"/>
</dbReference>
<dbReference type="InterPro" id="IPR016126">
    <property type="entry name" value="Secretoglobin"/>
</dbReference>
<dbReference type="InterPro" id="IPR043215">
    <property type="entry name" value="Secretoglobin_1C-like"/>
</dbReference>
<dbReference type="InterPro" id="IPR035960">
    <property type="entry name" value="Secretoglobin_sf"/>
</dbReference>
<dbReference type="InterPro" id="IPR000329">
    <property type="entry name" value="Uteroglobin"/>
</dbReference>
<dbReference type="PANTHER" id="PTHR10136">
    <property type="entry name" value="SECRETOGLOBIN FAMILY 1 MEMBER"/>
    <property type="match status" value="1"/>
</dbReference>
<dbReference type="PANTHER" id="PTHR10136:SF6">
    <property type="entry name" value="UTEROGLOBIN"/>
    <property type="match status" value="1"/>
</dbReference>
<dbReference type="Pfam" id="PF01099">
    <property type="entry name" value="Uteroglobin"/>
    <property type="match status" value="1"/>
</dbReference>
<dbReference type="PRINTS" id="PR00486">
    <property type="entry name" value="UTEROGLOBIN"/>
</dbReference>
<dbReference type="SMART" id="SM00096">
    <property type="entry name" value="UTG"/>
    <property type="match status" value="1"/>
</dbReference>
<dbReference type="SUPFAM" id="SSF48201">
    <property type="entry name" value="Uteroglobin-like"/>
    <property type="match status" value="1"/>
</dbReference>
<dbReference type="PROSITE" id="PS51311">
    <property type="entry name" value="SCGB"/>
    <property type="match status" value="1"/>
</dbReference>
<organism>
    <name type="scientific">Lepus capensis</name>
    <name type="common">Brown hare</name>
    <dbReference type="NCBI Taxonomy" id="9981"/>
    <lineage>
        <taxon>Eukaryota</taxon>
        <taxon>Metazoa</taxon>
        <taxon>Chordata</taxon>
        <taxon>Craniata</taxon>
        <taxon>Vertebrata</taxon>
        <taxon>Euteleostomi</taxon>
        <taxon>Mammalia</taxon>
        <taxon>Eutheria</taxon>
        <taxon>Euarchontoglires</taxon>
        <taxon>Glires</taxon>
        <taxon>Lagomorpha</taxon>
        <taxon>Leporidae</taxon>
        <taxon>Lepus</taxon>
    </lineage>
</organism>
<reference key="1">
    <citation type="journal article" date="1986" name="Biochem. J.">
        <title>Nucleotide and derived amino acid sequences of a cDNA coding for pre-uteroglobin from the lung of the hare (Lepus capensis).</title>
        <authorList>
            <person name="Lopez de Haro M.S."/>
            <person name="Nieto A."/>
        </authorList>
    </citation>
    <scope>NUCLEOTIDE SEQUENCE [MRNA]</scope>
    <source>
        <tissue>Lung</tissue>
    </source>
</reference>
<name>UTER_LEPCA</name>
<evidence type="ECO:0000250" key="1"/>
<evidence type="ECO:0000250" key="2">
    <source>
        <dbReference type="UniProtKB" id="P11684"/>
    </source>
</evidence>
<evidence type="ECO:0000305" key="3"/>
<protein>
    <recommendedName>
        <fullName>Uteroglobin</fullName>
    </recommendedName>
    <alternativeName>
        <fullName>Blastokinin</fullName>
    </alternativeName>
    <alternativeName>
        <fullName>Secretoglobin family 1A member 1</fullName>
    </alternativeName>
</protein>
<gene>
    <name type="primary">SCGB1A1</name>
    <name type="synonym">UGB</name>
    <name type="synonym">UGL</name>
</gene>
<sequence>MKLTITLALVTLALLCSPASAGICPGFAHVIENLLLGTPSSYETSLKEFQPDDAMKDAGMQMKKVLDTLPQTTRENIIKLTEKIVKSPLCM</sequence>
<comment type="function">
    <text>Uteroglobin binds progesterone specifically and with high affinity. It may regulate progesterone concentrations reaching the blastocyst. It is also a potent inhibitor of phospholipase A2.</text>
</comment>
<comment type="subunit">
    <text evidence="2">Antiparallel homodimer; disulfide-linked (By similarity). Interaction with LMBR1L is controversial (By similarity).</text>
</comment>
<comment type="subcellular location">
    <subcellularLocation>
        <location>Secreted</location>
    </subcellularLocation>
</comment>
<comment type="similarity">
    <text evidence="3">Belongs to the secretoglobin family.</text>
</comment>
<accession>P06913</accession>
<proteinExistence type="inferred from homology"/>